<organism>
    <name type="scientific">Acidovorax ebreus (strain TPSY)</name>
    <name type="common">Diaphorobacter sp. (strain TPSY)</name>
    <dbReference type="NCBI Taxonomy" id="535289"/>
    <lineage>
        <taxon>Bacteria</taxon>
        <taxon>Pseudomonadati</taxon>
        <taxon>Pseudomonadota</taxon>
        <taxon>Betaproteobacteria</taxon>
        <taxon>Burkholderiales</taxon>
        <taxon>Comamonadaceae</taxon>
        <taxon>Diaphorobacter</taxon>
    </lineage>
</organism>
<keyword id="KW-0997">Cell inner membrane</keyword>
<keyword id="KW-1003">Cell membrane</keyword>
<keyword id="KW-0472">Membrane</keyword>
<keyword id="KW-0653">Protein transport</keyword>
<keyword id="KW-1185">Reference proteome</keyword>
<keyword id="KW-0811">Translocation</keyword>
<keyword id="KW-0812">Transmembrane</keyword>
<keyword id="KW-1133">Transmembrane helix</keyword>
<keyword id="KW-0813">Transport</keyword>
<feature type="chain" id="PRO_1000197869" description="Sec-independent protein translocase protein TatA">
    <location>
        <begin position="1"/>
        <end position="82"/>
    </location>
</feature>
<feature type="transmembrane region" description="Helical" evidence="1">
    <location>
        <begin position="1"/>
        <end position="21"/>
    </location>
</feature>
<feature type="region of interest" description="Disordered" evidence="2">
    <location>
        <begin position="46"/>
        <end position="82"/>
    </location>
</feature>
<feature type="compositionally biased region" description="Polar residues" evidence="2">
    <location>
        <begin position="49"/>
        <end position="67"/>
    </location>
</feature>
<feature type="compositionally biased region" description="Basic and acidic residues" evidence="2">
    <location>
        <begin position="72"/>
        <end position="82"/>
    </location>
</feature>
<accession>B9MDW9</accession>
<protein>
    <recommendedName>
        <fullName evidence="1">Sec-independent protein translocase protein TatA</fullName>
    </recommendedName>
</protein>
<name>TATA_ACIET</name>
<proteinExistence type="inferred from homology"/>
<dbReference type="EMBL" id="CP001392">
    <property type="protein sequence ID" value="ACM32223.1"/>
    <property type="molecule type" value="Genomic_DNA"/>
</dbReference>
<dbReference type="RefSeq" id="WP_012655730.1">
    <property type="nucleotide sequence ID" value="NC_011992.1"/>
</dbReference>
<dbReference type="SMR" id="B9MDW9"/>
<dbReference type="KEGG" id="dia:Dtpsy_0744"/>
<dbReference type="eggNOG" id="COG1826">
    <property type="taxonomic scope" value="Bacteria"/>
</dbReference>
<dbReference type="HOGENOM" id="CLU_086034_5_1_4"/>
<dbReference type="Proteomes" id="UP000000450">
    <property type="component" value="Chromosome"/>
</dbReference>
<dbReference type="GO" id="GO:0033281">
    <property type="term" value="C:TAT protein transport complex"/>
    <property type="evidence" value="ECO:0007669"/>
    <property type="project" value="UniProtKB-UniRule"/>
</dbReference>
<dbReference type="GO" id="GO:0008320">
    <property type="term" value="F:protein transmembrane transporter activity"/>
    <property type="evidence" value="ECO:0007669"/>
    <property type="project" value="UniProtKB-UniRule"/>
</dbReference>
<dbReference type="GO" id="GO:0043953">
    <property type="term" value="P:protein transport by the Tat complex"/>
    <property type="evidence" value="ECO:0007669"/>
    <property type="project" value="UniProtKB-UniRule"/>
</dbReference>
<dbReference type="Gene3D" id="1.20.5.3310">
    <property type="match status" value="1"/>
</dbReference>
<dbReference type="HAMAP" id="MF_00236">
    <property type="entry name" value="TatA_E"/>
    <property type="match status" value="1"/>
</dbReference>
<dbReference type="InterPro" id="IPR003369">
    <property type="entry name" value="TatA/B/E"/>
</dbReference>
<dbReference type="InterPro" id="IPR006312">
    <property type="entry name" value="TatA/E"/>
</dbReference>
<dbReference type="NCBIfam" id="NF002813">
    <property type="entry name" value="PRK02958.1"/>
    <property type="match status" value="1"/>
</dbReference>
<dbReference type="NCBIfam" id="TIGR01411">
    <property type="entry name" value="tatAE"/>
    <property type="match status" value="1"/>
</dbReference>
<dbReference type="PANTHER" id="PTHR42982">
    <property type="entry name" value="SEC-INDEPENDENT PROTEIN TRANSLOCASE PROTEIN TATA"/>
    <property type="match status" value="1"/>
</dbReference>
<dbReference type="PANTHER" id="PTHR42982:SF1">
    <property type="entry name" value="SEC-INDEPENDENT PROTEIN TRANSLOCASE PROTEIN TATA"/>
    <property type="match status" value="1"/>
</dbReference>
<dbReference type="Pfam" id="PF02416">
    <property type="entry name" value="TatA_B_E"/>
    <property type="match status" value="1"/>
</dbReference>
<reference key="1">
    <citation type="submission" date="2009-01" db="EMBL/GenBank/DDBJ databases">
        <title>Complete sequence of Diaphorobacter sp. TPSY.</title>
        <authorList>
            <consortium name="US DOE Joint Genome Institute"/>
            <person name="Lucas S."/>
            <person name="Copeland A."/>
            <person name="Lapidus A."/>
            <person name="Glavina del Rio T."/>
            <person name="Tice H."/>
            <person name="Bruce D."/>
            <person name="Goodwin L."/>
            <person name="Pitluck S."/>
            <person name="Chertkov O."/>
            <person name="Brettin T."/>
            <person name="Detter J.C."/>
            <person name="Han C."/>
            <person name="Larimer F."/>
            <person name="Land M."/>
            <person name="Hauser L."/>
            <person name="Kyrpides N."/>
            <person name="Mikhailova N."/>
            <person name="Coates J.D."/>
        </authorList>
    </citation>
    <scope>NUCLEOTIDE SEQUENCE [LARGE SCALE GENOMIC DNA]</scope>
    <source>
        <strain>TPSY</strain>
    </source>
</reference>
<gene>
    <name evidence="1" type="primary">tatA</name>
    <name type="ordered locus">Dtpsy_0744</name>
</gene>
<sequence length="82" mass="8539">MGSFSIWHWLIVLLIVVMVFGTKKLKNIGSDLGGAVKGFKDGMKDGASTDDSATTSAPAGQVTNNSAAADKTTIDVEAKHKS</sequence>
<evidence type="ECO:0000255" key="1">
    <source>
        <dbReference type="HAMAP-Rule" id="MF_00236"/>
    </source>
</evidence>
<evidence type="ECO:0000256" key="2">
    <source>
        <dbReference type="SAM" id="MobiDB-lite"/>
    </source>
</evidence>
<comment type="function">
    <text evidence="1">Part of the twin-arginine translocation (Tat) system that transports large folded proteins containing a characteristic twin-arginine motif in their signal peptide across membranes. TatA could form the protein-conducting channel of the Tat system.</text>
</comment>
<comment type="subunit">
    <text evidence="1">The Tat system comprises two distinct complexes: a TatABC complex, containing multiple copies of TatA, TatB and TatC subunits, and a separate TatA complex, containing only TatA subunits. Substrates initially bind to the TatABC complex, which probably triggers association of the separate TatA complex to form the active translocon.</text>
</comment>
<comment type="subcellular location">
    <subcellularLocation>
        <location evidence="1">Cell inner membrane</location>
        <topology evidence="1">Single-pass membrane protein</topology>
    </subcellularLocation>
</comment>
<comment type="similarity">
    <text evidence="1">Belongs to the TatA/E family.</text>
</comment>